<keyword id="KW-1015">Disulfide bond</keyword>
<keyword id="KW-0339">Growth factor</keyword>
<keyword id="KW-0873">Pyrrolidone carboxylic acid</keyword>
<keyword id="KW-0964">Secreted</keyword>
<keyword id="KW-0732">Signal</keyword>
<keyword id="KW-0800">Toxin</keyword>
<accession>C0K3N3</accession>
<dbReference type="EMBL" id="FJ554637">
    <property type="protein sequence ID" value="ACN22040.1"/>
    <property type="molecule type" value="mRNA"/>
</dbReference>
<dbReference type="SMR" id="C0K3N3"/>
<dbReference type="GO" id="GO:0005615">
    <property type="term" value="C:extracellular space"/>
    <property type="evidence" value="ECO:0007669"/>
    <property type="project" value="TreeGrafter"/>
</dbReference>
<dbReference type="GO" id="GO:0016020">
    <property type="term" value="C:membrane"/>
    <property type="evidence" value="ECO:0007669"/>
    <property type="project" value="InterPro"/>
</dbReference>
<dbReference type="GO" id="GO:0042056">
    <property type="term" value="F:chemoattractant activity"/>
    <property type="evidence" value="ECO:0007669"/>
    <property type="project" value="TreeGrafter"/>
</dbReference>
<dbReference type="GO" id="GO:0008083">
    <property type="term" value="F:growth factor activity"/>
    <property type="evidence" value="ECO:0007669"/>
    <property type="project" value="UniProtKB-KW"/>
</dbReference>
<dbReference type="GO" id="GO:0090729">
    <property type="term" value="F:toxin activity"/>
    <property type="evidence" value="ECO:0007669"/>
    <property type="project" value="UniProtKB-KW"/>
</dbReference>
<dbReference type="GO" id="GO:0005172">
    <property type="term" value="F:vascular endothelial growth factor receptor binding"/>
    <property type="evidence" value="ECO:0007669"/>
    <property type="project" value="TreeGrafter"/>
</dbReference>
<dbReference type="GO" id="GO:0050930">
    <property type="term" value="P:induction of positive chemotaxis"/>
    <property type="evidence" value="ECO:0007669"/>
    <property type="project" value="TreeGrafter"/>
</dbReference>
<dbReference type="GO" id="GO:0045766">
    <property type="term" value="P:positive regulation of angiogenesis"/>
    <property type="evidence" value="ECO:0007669"/>
    <property type="project" value="TreeGrafter"/>
</dbReference>
<dbReference type="GO" id="GO:0001938">
    <property type="term" value="P:positive regulation of endothelial cell proliferation"/>
    <property type="evidence" value="ECO:0007669"/>
    <property type="project" value="TreeGrafter"/>
</dbReference>
<dbReference type="GO" id="GO:0060754">
    <property type="term" value="P:positive regulation of mast cell chemotaxis"/>
    <property type="evidence" value="ECO:0007669"/>
    <property type="project" value="TreeGrafter"/>
</dbReference>
<dbReference type="GO" id="GO:0001666">
    <property type="term" value="P:response to hypoxia"/>
    <property type="evidence" value="ECO:0007669"/>
    <property type="project" value="TreeGrafter"/>
</dbReference>
<dbReference type="GO" id="GO:0002040">
    <property type="term" value="P:sprouting angiogenesis"/>
    <property type="evidence" value="ECO:0007669"/>
    <property type="project" value="TreeGrafter"/>
</dbReference>
<dbReference type="GO" id="GO:0048010">
    <property type="term" value="P:vascular endothelial growth factor receptor signaling pathway"/>
    <property type="evidence" value="ECO:0007669"/>
    <property type="project" value="TreeGrafter"/>
</dbReference>
<dbReference type="GO" id="GO:0038084">
    <property type="term" value="P:vascular endothelial growth factor signaling pathway"/>
    <property type="evidence" value="ECO:0007669"/>
    <property type="project" value="TreeGrafter"/>
</dbReference>
<dbReference type="CDD" id="cd00135">
    <property type="entry name" value="PDGF"/>
    <property type="match status" value="1"/>
</dbReference>
<dbReference type="FunFam" id="2.10.90.10:FF:000030">
    <property type="entry name" value="Vascular endothelial growth factor B"/>
    <property type="match status" value="1"/>
</dbReference>
<dbReference type="Gene3D" id="2.10.90.10">
    <property type="entry name" value="Cystine-knot cytokines"/>
    <property type="match status" value="1"/>
</dbReference>
<dbReference type="InterPro" id="IPR029034">
    <property type="entry name" value="Cystine-knot_cytokine"/>
</dbReference>
<dbReference type="InterPro" id="IPR023581">
    <property type="entry name" value="PD_growth_factor_CS"/>
</dbReference>
<dbReference type="InterPro" id="IPR000072">
    <property type="entry name" value="PDGF/VEGF_dom"/>
</dbReference>
<dbReference type="InterPro" id="IPR050507">
    <property type="entry name" value="PDGF/VEGF_growth_factor"/>
</dbReference>
<dbReference type="PANTHER" id="PTHR12025">
    <property type="entry name" value="VASCULAR ENDOTHELIAL GROWTH FACTOR"/>
    <property type="match status" value="1"/>
</dbReference>
<dbReference type="PANTHER" id="PTHR12025:SF5">
    <property type="entry name" value="VASCULAR ENDOTHELIAL GROWTH FACTOR A, LONG FORM"/>
    <property type="match status" value="1"/>
</dbReference>
<dbReference type="Pfam" id="PF00341">
    <property type="entry name" value="PDGF"/>
    <property type="match status" value="1"/>
</dbReference>
<dbReference type="SMART" id="SM00141">
    <property type="entry name" value="PDGF"/>
    <property type="match status" value="1"/>
</dbReference>
<dbReference type="SUPFAM" id="SSF57501">
    <property type="entry name" value="Cystine-knot cytokines"/>
    <property type="match status" value="1"/>
</dbReference>
<dbReference type="PROSITE" id="PS00249">
    <property type="entry name" value="PDGF_1"/>
    <property type="match status" value="1"/>
</dbReference>
<dbReference type="PROSITE" id="PS50278">
    <property type="entry name" value="PDGF_2"/>
    <property type="match status" value="1"/>
</dbReference>
<organism>
    <name type="scientific">Crotalus atrox</name>
    <name type="common">Western diamondback rattlesnake</name>
    <dbReference type="NCBI Taxonomy" id="8730"/>
    <lineage>
        <taxon>Eukaryota</taxon>
        <taxon>Metazoa</taxon>
        <taxon>Chordata</taxon>
        <taxon>Craniata</taxon>
        <taxon>Vertebrata</taxon>
        <taxon>Euteleostomi</taxon>
        <taxon>Lepidosauria</taxon>
        <taxon>Squamata</taxon>
        <taxon>Bifurcata</taxon>
        <taxon>Unidentata</taxon>
        <taxon>Episquamata</taxon>
        <taxon>Toxicofera</taxon>
        <taxon>Serpentes</taxon>
        <taxon>Colubroidea</taxon>
        <taxon>Viperidae</taxon>
        <taxon>Crotalinae</taxon>
        <taxon>Crotalus</taxon>
    </lineage>
</organism>
<feature type="signal peptide" evidence="6">
    <location>
        <begin position="1"/>
        <end position="24"/>
    </location>
</feature>
<feature type="chain" id="PRO_5000452062" description="Snake venom vascular endothelial growth factor toxin cratrin">
    <location>
        <begin position="25"/>
        <end position="144"/>
    </location>
</feature>
<feature type="region of interest" description="Disordered" evidence="7">
    <location>
        <begin position="119"/>
        <end position="144"/>
    </location>
</feature>
<feature type="compositionally biased region" description="Basic and acidic residues" evidence="7">
    <location>
        <begin position="132"/>
        <end position="144"/>
    </location>
</feature>
<feature type="modified residue" description="Pyrrolidone carboxylic acid" evidence="4">
    <location>
        <position position="25"/>
    </location>
</feature>
<feature type="disulfide bond" evidence="3">
    <location>
        <begin position="38"/>
        <end position="80"/>
    </location>
</feature>
<feature type="disulfide bond" description="Interchain (with C-72)" evidence="3">
    <location>
        <position position="63"/>
    </location>
</feature>
<feature type="disulfide bond" evidence="3">
    <location>
        <begin position="69"/>
        <end position="115"/>
    </location>
</feature>
<feature type="disulfide bond" description="Interchain (with C-63)" evidence="3">
    <location>
        <position position="72"/>
    </location>
</feature>
<feature type="disulfide bond" evidence="3">
    <location>
        <begin position="73"/>
        <end position="117"/>
    </location>
</feature>
<comment type="function">
    <text evidence="2 4 5">Snake venom VEGFs that may contribute to venom dispersion and prey subjugation by inducing vascular permeability and hypotension. This protein induces an increase in capillary permeability after intradermal injection, as well as a drastic hypotensive effect after intravenous injection (By similarity). The hypotension is mediated by nitric oxide (NO), which is produced by VEGF-activated endothelium NO synthase. Also induces angiogenesis in vitro (By similarity). Like other crotalid VEGFs, this protein interacts with VEGF receptor-1 (FLT1) with a high affinity, whereas it binds to VEGF receptor-2 (KDR) with a low affinity (By similarity).</text>
</comment>
<comment type="subunit">
    <text evidence="2">Homodimer; disulfide-linked. Interacts with VEGF receptor-1 (FLT1) with a high affinity, whereas it binds to VEGF receptor-2 (KDR) with a low affinity. Does not bind VEGF receptor-3 (FLT4).</text>
</comment>
<comment type="subcellular location">
    <subcellularLocation>
        <location evidence="10">Secreted</location>
    </subcellularLocation>
</comment>
<comment type="tissue specificity">
    <text evidence="10">Expressed by the venom gland.</text>
</comment>
<comment type="similarity">
    <text evidence="9">Belongs to the PDGF/VEGF growth factor family. Snake venom VEGF subfamily.</text>
</comment>
<evidence type="ECO:0000250" key="1">
    <source>
        <dbReference type="UniProtKB" id="P0DL42"/>
    </source>
</evidence>
<evidence type="ECO:0000250" key="2">
    <source>
        <dbReference type="UniProtKB" id="P67862"/>
    </source>
</evidence>
<evidence type="ECO:0000250" key="3">
    <source>
        <dbReference type="UniProtKB" id="P67863"/>
    </source>
</evidence>
<evidence type="ECO:0000250" key="4">
    <source>
        <dbReference type="UniProtKB" id="P83942"/>
    </source>
</evidence>
<evidence type="ECO:0000250" key="5">
    <source>
        <dbReference type="UniProtKB" id="Q330K6"/>
    </source>
</evidence>
<evidence type="ECO:0000255" key="6"/>
<evidence type="ECO:0000256" key="7">
    <source>
        <dbReference type="SAM" id="MobiDB-lite"/>
    </source>
</evidence>
<evidence type="ECO:0000303" key="8">
    <source>
    </source>
</evidence>
<evidence type="ECO:0000305" key="9"/>
<evidence type="ECO:0000305" key="10">
    <source>
    </source>
</evidence>
<name>TXVE_CROAT</name>
<proteinExistence type="evidence at transcript level"/>
<protein>
    <recommendedName>
        <fullName evidence="8">Snake venom vascular endothelial growth factor toxin cratrin</fullName>
        <shortName>svVEGF</shortName>
    </recommendedName>
    <alternativeName>
        <fullName evidence="1">VEGF-F</fullName>
    </alternativeName>
</protein>
<reference key="1">
    <citation type="journal article" date="2009" name="J. Biol. Chem.">
        <title>Snake venom vascular endothelial growth factors (VEGF-Fs) exclusively vary their structures and functions among species.</title>
        <authorList>
            <person name="Yamazaki Y."/>
            <person name="Matsunaga Y."/>
            <person name="Tokunaga Y."/>
            <person name="Obayashi S."/>
            <person name="Saito M."/>
            <person name="Morita T."/>
        </authorList>
    </citation>
    <scope>NUCLEOTIDE SEQUENCE [MRNA]</scope>
    <source>
        <tissue>Venom gland</tissue>
    </source>
</reference>
<sequence>MAVYLLAVAILFCIQGWPSGTVQGQAMSFMEVYERSVCQTREMLVSILDEYPSEVAHLFRPSCVTVLRCGGCCTDESLTCTATGKRSVGREIMRVDPRKGTSKIEVMQFTEHTECECRPRSTVNNGKRKKNPKEGEPRAKFPLV</sequence>